<proteinExistence type="evidence at protein level"/>
<keyword id="KW-0001">2Fe-2S</keyword>
<keyword id="KW-0007">Acetylation</keyword>
<keyword id="KW-0903">Direct protein sequencing</keyword>
<keyword id="KW-0408">Iron</keyword>
<keyword id="KW-0411">Iron-sulfur</keyword>
<keyword id="KW-1017">Isopeptide bond</keyword>
<keyword id="KW-0472">Membrane</keyword>
<keyword id="KW-0479">Metal-binding</keyword>
<keyword id="KW-0496">Mitochondrion</keyword>
<keyword id="KW-1000">Mitochondrion outer membrane</keyword>
<keyword id="KW-1185">Reference proteome</keyword>
<keyword id="KW-0704">Schiff base</keyword>
<keyword id="KW-0735">Signal-anchor</keyword>
<keyword id="KW-0808">Transferase</keyword>
<keyword id="KW-0812">Transmembrane</keyword>
<keyword id="KW-1133">Transmembrane helix</keyword>
<keyword id="KW-0832">Ubl conjugation</keyword>
<feature type="initiator methionine" description="Removed" evidence="2">
    <location>
        <position position="1"/>
    </location>
</feature>
<feature type="chain" id="PRO_0000246997" description="CDGSH iron-sulfur domain-containing protein 1">
    <location>
        <begin position="2"/>
        <end position="106"/>
    </location>
</feature>
<feature type="transmembrane region" description="Helical; Signal-anchor for type III membrane protein" evidence="3">
    <location>
        <begin position="10"/>
        <end position="29"/>
    </location>
</feature>
<feature type="topological domain" description="Cytoplasmic" evidence="3">
    <location>
        <begin position="30"/>
        <end position="106"/>
    </location>
</feature>
<feature type="region of interest" description="Disordered" evidence="4">
    <location>
        <begin position="84"/>
        <end position="106"/>
    </location>
</feature>
<feature type="active site" description="Schiff-base intermediate with pyridoxal 5'-phosphate" evidence="2">
    <location>
        <position position="53"/>
    </location>
</feature>
<feature type="binding site" evidence="2">
    <location>
        <position position="70"/>
    </location>
    <ligand>
        <name>[2Fe-2S] cluster</name>
        <dbReference type="ChEBI" id="CHEBI:190135"/>
    </ligand>
</feature>
<feature type="binding site" evidence="2">
    <location>
        <position position="72"/>
    </location>
    <ligand>
        <name>[2Fe-2S] cluster</name>
        <dbReference type="ChEBI" id="CHEBI:190135"/>
    </ligand>
</feature>
<feature type="binding site" evidence="2">
    <location>
        <position position="81"/>
    </location>
    <ligand>
        <name>[2Fe-2S] cluster</name>
        <dbReference type="ChEBI" id="CHEBI:190135"/>
    </ligand>
</feature>
<feature type="binding site" evidence="2">
    <location>
        <position position="85"/>
    </location>
    <ligand>
        <name>[2Fe-2S] cluster</name>
        <dbReference type="ChEBI" id="CHEBI:190135"/>
    </ligand>
</feature>
<feature type="modified residue" description="N-acetylserine" evidence="2">
    <location>
        <position position="2"/>
    </location>
</feature>
<feature type="modified residue" description="N6-acetyllysine; alternate" evidence="1">
    <location>
        <position position="53"/>
    </location>
</feature>
<feature type="modified residue" description="N6-acetyllysine; alternate" evidence="1">
    <location>
        <position position="66"/>
    </location>
</feature>
<feature type="modified residue" description="N6-acetyllysine; alternate" evidence="1">
    <location>
        <position position="102"/>
    </location>
</feature>
<feature type="cross-link" description="Glycyl lysine isopeptide (Lys-Gly) (interchain with G-Cter in ubiquitin)" evidence="2">
    <location>
        <position position="40"/>
    </location>
</feature>
<feature type="cross-link" description="Glycyl lysine isopeptide (Lys-Gly) (interchain with G-Cter in ubiquitin); alternate" evidence="2">
    <location>
        <position position="53"/>
    </location>
</feature>
<feature type="cross-link" description="Glycyl lysine isopeptide (Lys-Gly) (interchain with G-Cter in ubiquitin); alternate" evidence="2">
    <location>
        <position position="66"/>
    </location>
</feature>
<feature type="cross-link" description="Glycyl lysine isopeptide (Lys-Gly) (interchain with G-Cter in ubiquitin)" evidence="2">
    <location>
        <position position="76"/>
    </location>
</feature>
<feature type="cross-link" description="Glycyl lysine isopeptide (Lys-Gly) (interchain with G-Cter in ubiquitin)" evidence="2">
    <location>
        <position position="77"/>
    </location>
</feature>
<feature type="cross-link" description="Glycyl lysine isopeptide (Lys-Gly) (interchain with G-Cter in ubiquitin)" evidence="2">
    <location>
        <position position="87"/>
    </location>
</feature>
<feature type="cross-link" description="Glycyl lysine isopeptide (Lys-Gly) (interchain with G-Cter in ubiquitin); alternate" evidence="2">
    <location>
        <position position="102"/>
    </location>
</feature>
<feature type="cross-link" description="Glycyl lysine isopeptide (Lys-Gly) (interchain with G-Cter in ubiquitin)" evidence="2">
    <location>
        <position position="103"/>
    </location>
</feature>
<feature type="cross-link" description="Glycyl lysine isopeptide (Lys-Gly) (interchain with G-Cter in ubiquitin)" evidence="2">
    <location>
        <position position="104"/>
    </location>
</feature>
<dbReference type="EC" id="2.6.1.3" evidence="2"/>
<dbReference type="EMBL" id="BC103105">
    <property type="protein sequence ID" value="AAI03106.1"/>
    <property type="molecule type" value="mRNA"/>
</dbReference>
<dbReference type="RefSeq" id="NP_001029229.1">
    <property type="nucleotide sequence ID" value="NM_001034057.1"/>
</dbReference>
<dbReference type="SMR" id="Q3ZBU2"/>
<dbReference type="FunCoup" id="Q3ZBU2">
    <property type="interactions" value="883"/>
</dbReference>
<dbReference type="STRING" id="9913.ENSBTAP00000004739"/>
<dbReference type="PaxDb" id="9913-ENSBTAP00000004739"/>
<dbReference type="PeptideAtlas" id="Q3ZBU2"/>
<dbReference type="Ensembl" id="ENSBTAT00000004739.5">
    <property type="protein sequence ID" value="ENSBTAP00000004739.4"/>
    <property type="gene ID" value="ENSBTAG00000003634.6"/>
</dbReference>
<dbReference type="GeneID" id="531444"/>
<dbReference type="KEGG" id="bta:531444"/>
<dbReference type="CTD" id="55847"/>
<dbReference type="VEuPathDB" id="HostDB:ENSBTAG00000003634"/>
<dbReference type="VGNC" id="VGNC:27371">
    <property type="gene designation" value="CISD1"/>
</dbReference>
<dbReference type="eggNOG" id="KOG3461">
    <property type="taxonomic scope" value="Eukaryota"/>
</dbReference>
<dbReference type="GeneTree" id="ENSGT00940000154445"/>
<dbReference type="HOGENOM" id="CLU_132293_1_0_1"/>
<dbReference type="InParanoid" id="Q3ZBU2"/>
<dbReference type="OMA" id="VAAWSWC"/>
<dbReference type="OrthoDB" id="449252at2759"/>
<dbReference type="TreeFam" id="TF324661"/>
<dbReference type="Proteomes" id="UP000009136">
    <property type="component" value="Chromosome 26"/>
</dbReference>
<dbReference type="Bgee" id="ENSBTAG00000003634">
    <property type="expression patterns" value="Expressed in spermatid and 105 other cell types or tissues"/>
</dbReference>
<dbReference type="GO" id="GO:0005741">
    <property type="term" value="C:mitochondrial outer membrane"/>
    <property type="evidence" value="ECO:0000318"/>
    <property type="project" value="GO_Central"/>
</dbReference>
<dbReference type="GO" id="GO:0051537">
    <property type="term" value="F:2 iron, 2 sulfur cluster binding"/>
    <property type="evidence" value="ECO:0000250"/>
    <property type="project" value="UniProtKB"/>
</dbReference>
<dbReference type="GO" id="GO:0047801">
    <property type="term" value="F:L-cysteine transaminase activity"/>
    <property type="evidence" value="ECO:0000250"/>
    <property type="project" value="UniProtKB"/>
</dbReference>
<dbReference type="GO" id="GO:0046872">
    <property type="term" value="F:metal ion binding"/>
    <property type="evidence" value="ECO:0007669"/>
    <property type="project" value="UniProtKB-KW"/>
</dbReference>
<dbReference type="GO" id="GO:0042803">
    <property type="term" value="F:protein homodimerization activity"/>
    <property type="evidence" value="ECO:0000250"/>
    <property type="project" value="UniProtKB"/>
</dbReference>
<dbReference type="GO" id="GO:0030170">
    <property type="term" value="F:pyridoxal phosphate binding"/>
    <property type="evidence" value="ECO:0000250"/>
    <property type="project" value="UniProtKB"/>
</dbReference>
<dbReference type="GO" id="GO:0006879">
    <property type="term" value="P:intracellular iron ion homeostasis"/>
    <property type="evidence" value="ECO:0000318"/>
    <property type="project" value="GO_Central"/>
</dbReference>
<dbReference type="GO" id="GO:0051604">
    <property type="term" value="P:protein maturation"/>
    <property type="evidence" value="ECO:0000250"/>
    <property type="project" value="UniProtKB"/>
</dbReference>
<dbReference type="GO" id="GO:0010506">
    <property type="term" value="P:regulation of autophagy"/>
    <property type="evidence" value="ECO:0007669"/>
    <property type="project" value="InterPro"/>
</dbReference>
<dbReference type="FunFam" id="3.40.5.90:FF:000001">
    <property type="entry name" value="CDGSH iron-sulfur domain-containing protein 1"/>
    <property type="match status" value="1"/>
</dbReference>
<dbReference type="Gene3D" id="3.40.5.90">
    <property type="entry name" value="CDGSH iron-sulfur domain, mitoNEET-type"/>
    <property type="match status" value="1"/>
</dbReference>
<dbReference type="InterPro" id="IPR045131">
    <property type="entry name" value="CISD1/2"/>
</dbReference>
<dbReference type="InterPro" id="IPR018967">
    <property type="entry name" value="FeS-contain_CDGSH-typ"/>
</dbReference>
<dbReference type="InterPro" id="IPR019610">
    <property type="entry name" value="FeS-contain_mitoNEET_N"/>
</dbReference>
<dbReference type="InterPro" id="IPR042216">
    <property type="entry name" value="MitoNEET_CISD"/>
</dbReference>
<dbReference type="PANTHER" id="PTHR13680">
    <property type="entry name" value="CDGSH IRON-SULFUR DOMAIN-CONTAINING PROTEIN 1"/>
    <property type="match status" value="1"/>
</dbReference>
<dbReference type="PANTHER" id="PTHR13680:SF5">
    <property type="entry name" value="CDGSH IRON-SULFUR DOMAIN-CONTAINING PROTEIN 1"/>
    <property type="match status" value="1"/>
</dbReference>
<dbReference type="Pfam" id="PF10660">
    <property type="entry name" value="MitoNEET_N"/>
    <property type="match status" value="1"/>
</dbReference>
<dbReference type="Pfam" id="PF09360">
    <property type="entry name" value="zf-CDGSH"/>
    <property type="match status" value="1"/>
</dbReference>
<dbReference type="SMART" id="SM00704">
    <property type="entry name" value="ZnF_CDGSH"/>
    <property type="match status" value="1"/>
</dbReference>
<sequence length="106" mass="11983">MSMTSSVRVEWIAAVTIAAGTAAIGYLAYKRFYVKDHRNKSMVNPHIQKDNPKVVHAFDMEDLGDKAVYCRCWRSKKFPLCDGSHTKHNEETGDNVGPLIIKKKDT</sequence>
<protein>
    <recommendedName>
        <fullName>CDGSH iron-sulfur domain-containing protein 1</fullName>
    </recommendedName>
    <alternativeName>
        <fullName evidence="2">Cysteine transaminase CISD1</fullName>
        <ecNumber evidence="2">2.6.1.3</ecNumber>
    </alternativeName>
    <alternativeName>
        <fullName>MitoNEET</fullName>
    </alternativeName>
</protein>
<name>CISD1_BOVIN</name>
<reference key="1">
    <citation type="submission" date="2005-08" db="EMBL/GenBank/DDBJ databases">
        <authorList>
            <consortium name="NIH - Mammalian Gene Collection (MGC) project"/>
        </authorList>
    </citation>
    <scope>NUCLEOTIDE SEQUENCE [LARGE SCALE MRNA]</scope>
    <source>
        <strain>Hereford</strain>
        <tissue>Heart ventricle</tissue>
    </source>
</reference>
<reference key="2">
    <citation type="journal article" date="2004" name="Am. J. Physiol.">
        <title>Identification of a novel mitochondrial protein ('mitoNEET') cross-linked specifically by a thiazolidinedione photoprobe.</title>
        <authorList>
            <person name="Colca J.R."/>
            <person name="McDonald W.G."/>
            <person name="Waldon D.J."/>
            <person name="Leone J.W."/>
            <person name="Lull J.M."/>
            <person name="Bannow C.A."/>
            <person name="Lund E.T."/>
            <person name="Mathews W.R."/>
        </authorList>
    </citation>
    <scope>PROTEIN SEQUENCE OF 60-71</scope>
    <scope>SUBCELLULAR LOCATION</scope>
    <scope>IDENTIFICATION BY MASS SPECTROMETRY</scope>
    <source>
        <tissue>Brain</tissue>
    </source>
</reference>
<comment type="function">
    <text evidence="1 2">L-cysteine transaminase that catalyzes the reversible transfer of the amino group from L-cysteine to the alpha-keto acid 2-oxoglutarate to respectively form 2-oxo-3-sulfanylpropanoate and L-glutamate (By similarity). The catalytic cycle occurs in the presence of pyridoxal 5'-phosphate (PLP) cofactor that facilitates transamination by initially forming an internal aldimine with the epsilon-amino group of active site Lys-55 residue on the enzyme (PLP-enzyme aldimine), subsequently displaced by formation of an external aldimine with the substrate amino group (PLP-L-cysteine aldimine). The external aldimine is further deprotonated to form a carbanion intermediate, which in the presence of 2-oxoglutarate regenerates PLP yielding final products 2-oxo-3-sulfanylpropanoate and L-glutamate. The proton transfer in carbanion intermediate is suggested to be controlled by the active site lysine residue, whereas PLP stabilizes carbanion structure through electron delocalization, also known as the electron sink effect (By similarity). Plays a key role in regulating maximal capacity for electron transport and oxidative phosphorylation (By similarity). May be involved in iron-sulfur cluster shuttling and/or in redox reactions. Can transfer the [2Fe-2S] cluster to an apo-acceptor protein only when in the oxidation state, likely serving as a redox sensor that regulates mitochondrial iron-sulfur cluster assembly and iron trafficking upon oxidative stress (By similarity).</text>
</comment>
<comment type="catalytic activity">
    <reaction evidence="2">
        <text>L-cysteine + 2-oxoglutarate = 2-oxo-3-sulfanylpropanoate + L-glutamate</text>
        <dbReference type="Rhea" id="RHEA:17441"/>
        <dbReference type="ChEBI" id="CHEBI:16810"/>
        <dbReference type="ChEBI" id="CHEBI:29985"/>
        <dbReference type="ChEBI" id="CHEBI:35235"/>
        <dbReference type="ChEBI" id="CHEBI:57678"/>
        <dbReference type="EC" id="2.6.1.3"/>
    </reaction>
    <physiologicalReaction direction="left-to-right" evidence="2">
        <dbReference type="Rhea" id="RHEA:17442"/>
    </physiologicalReaction>
    <physiologicalReaction direction="right-to-left" evidence="2">
        <dbReference type="Rhea" id="RHEA:17443"/>
    </physiologicalReaction>
</comment>
<comment type="cofactor">
    <cofactor evidence="2">
        <name>[2Fe-2S] cluster</name>
        <dbReference type="ChEBI" id="CHEBI:190135"/>
    </cofactor>
    <text evidence="2">Binds 1 [2Fe-2S] cluster per subunit. The [2Fe-2S] cluster is redox-active and pH labile and is significantly less stable at pH 4.5 as compared with pH 7.0.</text>
</comment>
<comment type="cofactor">
    <cofactor evidence="2">
        <name>pyridoxal 5'-phosphate</name>
        <dbReference type="ChEBI" id="CHEBI:597326"/>
    </cofactor>
</comment>
<comment type="subunit">
    <text evidence="2">Homodimer.</text>
</comment>
<comment type="subcellular location">
    <subcellularLocation>
        <location evidence="5">Mitochondrion outer membrane</location>
        <topology evidence="5">Single-pass type III membrane protein</topology>
    </subcellularLocation>
</comment>
<comment type="PTM">
    <text evidence="2">Ubiquitinated by PRKN during mitophagy, leading to its degradation and enhancement of mitophagy. Deubiquitinated by USP30.</text>
</comment>
<comment type="miscellaneous">
    <text>Binds pioglitazone, an anti-diabetes drug.</text>
</comment>
<comment type="similarity">
    <text evidence="6">Belongs to the CISD protein family.</text>
</comment>
<evidence type="ECO:0000250" key="1">
    <source>
        <dbReference type="UniProtKB" id="Q91WS0"/>
    </source>
</evidence>
<evidence type="ECO:0000250" key="2">
    <source>
        <dbReference type="UniProtKB" id="Q9NZ45"/>
    </source>
</evidence>
<evidence type="ECO:0000255" key="3"/>
<evidence type="ECO:0000256" key="4">
    <source>
        <dbReference type="SAM" id="MobiDB-lite"/>
    </source>
</evidence>
<evidence type="ECO:0000269" key="5">
    <source>
    </source>
</evidence>
<evidence type="ECO:0000305" key="6"/>
<accession>Q3ZBU2</accession>
<gene>
    <name type="primary">CISD1</name>
    <name type="synonym">ZCD1</name>
</gene>
<organism>
    <name type="scientific">Bos taurus</name>
    <name type="common">Bovine</name>
    <dbReference type="NCBI Taxonomy" id="9913"/>
    <lineage>
        <taxon>Eukaryota</taxon>
        <taxon>Metazoa</taxon>
        <taxon>Chordata</taxon>
        <taxon>Craniata</taxon>
        <taxon>Vertebrata</taxon>
        <taxon>Euteleostomi</taxon>
        <taxon>Mammalia</taxon>
        <taxon>Eutheria</taxon>
        <taxon>Laurasiatheria</taxon>
        <taxon>Artiodactyla</taxon>
        <taxon>Ruminantia</taxon>
        <taxon>Pecora</taxon>
        <taxon>Bovidae</taxon>
        <taxon>Bovinae</taxon>
        <taxon>Bos</taxon>
    </lineage>
</organism>